<keyword id="KW-0067">ATP-binding</keyword>
<keyword id="KW-0418">Kinase</keyword>
<keyword id="KW-0547">Nucleotide-binding</keyword>
<keyword id="KW-1185">Reference proteome</keyword>
<keyword id="KW-0723">Serine/threonine-protein kinase</keyword>
<keyword id="KW-0808">Transferase</keyword>
<sequence length="332" mass="39527">MNQTEAAPVVSVSRVYAHVNEEMPREYWDYENMQEVFGYQDNYEIIRKVGRGKYSEVFEGLNVLNNSKCIIKVLKPVKYKKIKREIKILQNLAGGPNIISLLDIVRDPESKTPSLIFEFVDNIDFRTLYPTLSDYDIRYYSYELLKALDFCHSRGIMHRDVKPHNVMIDHKKRKLRLIDWGLAEFYHAGMEYNVRVASRYFKGPELLVDFREYDYSLDIWSFGVMFAALIFKKDTFFRGRDNYDQLVKIAKVLGTDELFAYVQKYQIVLDRQYDNILGQYPKRDWYSFVNRDNRSLANDEAIDLLNRLLRYDHQERLTCQEAMAHPYFQVLK</sequence>
<accession>P40231</accession>
<evidence type="ECO:0000250" key="1">
    <source>
        <dbReference type="UniProtKB" id="P15790"/>
    </source>
</evidence>
<evidence type="ECO:0000250" key="2">
    <source>
        <dbReference type="UniProtKB" id="P68400"/>
    </source>
</evidence>
<evidence type="ECO:0000255" key="3">
    <source>
        <dbReference type="PROSITE-ProRule" id="PRU00159"/>
    </source>
</evidence>
<evidence type="ECO:0000255" key="4">
    <source>
        <dbReference type="PROSITE-ProRule" id="PRU10027"/>
    </source>
</evidence>
<evidence type="ECO:0000305" key="5"/>
<evidence type="ECO:0000312" key="6">
    <source>
        <dbReference type="PomBase" id="SPAC23C11.11"/>
    </source>
</evidence>
<proteinExistence type="evidence at transcript level"/>
<organism>
    <name type="scientific">Schizosaccharomyces pombe (strain 972 / ATCC 24843)</name>
    <name type="common">Fission yeast</name>
    <dbReference type="NCBI Taxonomy" id="284812"/>
    <lineage>
        <taxon>Eukaryota</taxon>
        <taxon>Fungi</taxon>
        <taxon>Dikarya</taxon>
        <taxon>Ascomycota</taxon>
        <taxon>Taphrinomycotina</taxon>
        <taxon>Schizosaccharomycetes</taxon>
        <taxon>Schizosaccharomycetales</taxon>
        <taxon>Schizosaccharomycetaceae</taxon>
        <taxon>Schizosaccharomyces</taxon>
    </lineage>
</organism>
<comment type="function">
    <text evidence="2">Catalytic subunit of a constitutively active serine/threonine-protein kinase complex that phosphorylates a large number of substrates containing acidic residues C-terminal to the phosphorylated serine or threonine.</text>
</comment>
<comment type="catalytic activity">
    <reaction evidence="2">
        <text>L-seryl-[protein] + ATP = O-phospho-L-seryl-[protein] + ADP + H(+)</text>
        <dbReference type="Rhea" id="RHEA:17989"/>
        <dbReference type="Rhea" id="RHEA-COMP:9863"/>
        <dbReference type="Rhea" id="RHEA-COMP:11604"/>
        <dbReference type="ChEBI" id="CHEBI:15378"/>
        <dbReference type="ChEBI" id="CHEBI:29999"/>
        <dbReference type="ChEBI" id="CHEBI:30616"/>
        <dbReference type="ChEBI" id="CHEBI:83421"/>
        <dbReference type="ChEBI" id="CHEBI:456216"/>
        <dbReference type="EC" id="2.7.11.1"/>
    </reaction>
</comment>
<comment type="catalytic activity">
    <reaction evidence="2">
        <text>L-threonyl-[protein] + ATP = O-phospho-L-threonyl-[protein] + ADP + H(+)</text>
        <dbReference type="Rhea" id="RHEA:46608"/>
        <dbReference type="Rhea" id="RHEA-COMP:11060"/>
        <dbReference type="Rhea" id="RHEA-COMP:11605"/>
        <dbReference type="ChEBI" id="CHEBI:15378"/>
        <dbReference type="ChEBI" id="CHEBI:30013"/>
        <dbReference type="ChEBI" id="CHEBI:30616"/>
        <dbReference type="ChEBI" id="CHEBI:61977"/>
        <dbReference type="ChEBI" id="CHEBI:456216"/>
        <dbReference type="EC" id="2.7.11.1"/>
    </reaction>
</comment>
<comment type="subunit">
    <text evidence="1">Tetramer composed of two alpha chains, one beta chain and one beta' chain.</text>
</comment>
<comment type="similarity">
    <text evidence="3">Belongs to the protein kinase superfamily. Ser/Thr protein kinase family. CK2 subfamily.</text>
</comment>
<protein>
    <recommendedName>
        <fullName>Casein kinase II subunit alpha</fullName>
        <shortName>CK II subunit alpha</shortName>
        <ecNumber evidence="2">2.7.11.1</ecNumber>
    </recommendedName>
</protein>
<dbReference type="EC" id="2.7.11.1" evidence="2"/>
<dbReference type="EMBL" id="X74275">
    <property type="protein sequence ID" value="CAA52331.1"/>
    <property type="molecule type" value="mRNA"/>
</dbReference>
<dbReference type="EMBL" id="L29508">
    <property type="protein sequence ID" value="AAA19875.1"/>
    <property type="molecule type" value="mRNA"/>
</dbReference>
<dbReference type="EMBL" id="CU329670">
    <property type="protein sequence ID" value="CAB11164.1"/>
    <property type="molecule type" value="Genomic_DNA"/>
</dbReference>
<dbReference type="PIR" id="S44355">
    <property type="entry name" value="S44355"/>
</dbReference>
<dbReference type="RefSeq" id="NP_593642.1">
    <property type="nucleotide sequence ID" value="NM_001019073.2"/>
</dbReference>
<dbReference type="SMR" id="P40231"/>
<dbReference type="BioGRID" id="278457">
    <property type="interactions" value="29"/>
</dbReference>
<dbReference type="FunCoup" id="P40231">
    <property type="interactions" value="671"/>
</dbReference>
<dbReference type="IntAct" id="P40231">
    <property type="interactions" value="2"/>
</dbReference>
<dbReference type="STRING" id="284812.P40231"/>
<dbReference type="BindingDB" id="P40231"/>
<dbReference type="ChEMBL" id="CHEMBL1075255"/>
<dbReference type="iPTMnet" id="P40231"/>
<dbReference type="PaxDb" id="4896-SPAC23C11.11.1"/>
<dbReference type="EnsemblFungi" id="SPAC23C11.11.1">
    <property type="protein sequence ID" value="SPAC23C11.11.1:pep"/>
    <property type="gene ID" value="SPAC23C11.11"/>
</dbReference>
<dbReference type="GeneID" id="2541972"/>
<dbReference type="KEGG" id="spo:2541972"/>
<dbReference type="PomBase" id="SPAC23C11.11">
    <property type="gene designation" value="cka1"/>
</dbReference>
<dbReference type="VEuPathDB" id="FungiDB:SPAC23C11.11"/>
<dbReference type="eggNOG" id="KOG0668">
    <property type="taxonomic scope" value="Eukaryota"/>
</dbReference>
<dbReference type="HOGENOM" id="CLU_000288_70_4_1"/>
<dbReference type="InParanoid" id="P40231"/>
<dbReference type="OMA" id="ECHMIEW"/>
<dbReference type="PhylomeDB" id="P40231"/>
<dbReference type="BRENDA" id="2.7.11.1">
    <property type="organism ID" value="5613"/>
</dbReference>
<dbReference type="Reactome" id="R-SPO-2514853">
    <property type="pathway name" value="Condensation of Prometaphase Chromosomes"/>
</dbReference>
<dbReference type="Reactome" id="R-SPO-6804756">
    <property type="pathway name" value="Regulation of TP53 Activity through Phosphorylation"/>
</dbReference>
<dbReference type="Reactome" id="R-SPO-8934903">
    <property type="pathway name" value="Receptor Mediated Mitophagy"/>
</dbReference>
<dbReference type="Reactome" id="R-SPO-8948751">
    <property type="pathway name" value="Regulation of PTEN stability and activity"/>
</dbReference>
<dbReference type="PRO" id="PR:P40231"/>
<dbReference type="Proteomes" id="UP000002485">
    <property type="component" value="Chromosome I"/>
</dbReference>
<dbReference type="GO" id="GO:0051286">
    <property type="term" value="C:cell tip"/>
    <property type="evidence" value="ECO:0000314"/>
    <property type="project" value="PomBase"/>
</dbReference>
<dbReference type="GO" id="GO:0000785">
    <property type="term" value="C:chromatin"/>
    <property type="evidence" value="ECO:0000314"/>
    <property type="project" value="PomBase"/>
</dbReference>
<dbReference type="GO" id="GO:0005829">
    <property type="term" value="C:cytosol"/>
    <property type="evidence" value="ECO:0007005"/>
    <property type="project" value="PomBase"/>
</dbReference>
<dbReference type="GO" id="GO:0000935">
    <property type="term" value="C:division septum"/>
    <property type="evidence" value="ECO:0000314"/>
    <property type="project" value="PomBase"/>
</dbReference>
<dbReference type="GO" id="GO:0044732">
    <property type="term" value="C:mitotic spindle pole body"/>
    <property type="evidence" value="ECO:0000314"/>
    <property type="project" value="PomBase"/>
</dbReference>
<dbReference type="GO" id="GO:0005730">
    <property type="term" value="C:nucleolus"/>
    <property type="evidence" value="ECO:0000314"/>
    <property type="project" value="PomBase"/>
</dbReference>
<dbReference type="GO" id="GO:0005634">
    <property type="term" value="C:nucleus"/>
    <property type="evidence" value="ECO:0007005"/>
    <property type="project" value="PomBase"/>
</dbReference>
<dbReference type="GO" id="GO:0005956">
    <property type="term" value="C:protein kinase CK2 complex"/>
    <property type="evidence" value="ECO:0000353"/>
    <property type="project" value="PomBase"/>
</dbReference>
<dbReference type="GO" id="GO:0034456">
    <property type="term" value="C:UTP-C complex"/>
    <property type="evidence" value="ECO:0000266"/>
    <property type="project" value="PomBase"/>
</dbReference>
<dbReference type="GO" id="GO:0005524">
    <property type="term" value="F:ATP binding"/>
    <property type="evidence" value="ECO:0000255"/>
    <property type="project" value="PomBase"/>
</dbReference>
<dbReference type="GO" id="GO:0106310">
    <property type="term" value="F:protein serine kinase activity"/>
    <property type="evidence" value="ECO:0007669"/>
    <property type="project" value="RHEA"/>
</dbReference>
<dbReference type="GO" id="GO:0004674">
    <property type="term" value="F:protein serine/threonine kinase activity"/>
    <property type="evidence" value="ECO:0000314"/>
    <property type="project" value="PomBase"/>
</dbReference>
<dbReference type="GO" id="GO:0006974">
    <property type="term" value="P:DNA damage response"/>
    <property type="evidence" value="ECO:0000318"/>
    <property type="project" value="GO_Central"/>
</dbReference>
<dbReference type="GO" id="GO:0007163">
    <property type="term" value="P:establishment or maintenance of cell polarity"/>
    <property type="evidence" value="ECO:0000315"/>
    <property type="project" value="PomBase"/>
</dbReference>
<dbReference type="GO" id="GO:0000122">
    <property type="term" value="P:negative regulation of transcription by RNA polymerase II"/>
    <property type="evidence" value="ECO:0000314"/>
    <property type="project" value="PomBase"/>
</dbReference>
<dbReference type="GO" id="GO:2000247">
    <property type="term" value="P:positive regulation of establishment or maintenance of bipolar cell polarity regulating cell shape"/>
    <property type="evidence" value="ECO:0000315"/>
    <property type="project" value="PomBase"/>
</dbReference>
<dbReference type="GO" id="GO:0051726">
    <property type="term" value="P:regulation of cell cycle"/>
    <property type="evidence" value="ECO:0000318"/>
    <property type="project" value="GO_Central"/>
</dbReference>
<dbReference type="GO" id="GO:2000099">
    <property type="term" value="P:regulation of establishment or maintenance of bipolar cell polarity"/>
    <property type="evidence" value="ECO:0000314"/>
    <property type="project" value="PomBase"/>
</dbReference>
<dbReference type="GO" id="GO:0048024">
    <property type="term" value="P:regulation of mRNA splicing, via spliceosome"/>
    <property type="evidence" value="ECO:0000269"/>
    <property type="project" value="PomBase"/>
</dbReference>
<dbReference type="GO" id="GO:0023052">
    <property type="term" value="P:signaling"/>
    <property type="evidence" value="ECO:0000303"/>
    <property type="project" value="PomBase"/>
</dbReference>
<dbReference type="CDD" id="cd14132">
    <property type="entry name" value="STKc_CK2_alpha"/>
    <property type="match status" value="1"/>
</dbReference>
<dbReference type="FunFam" id="1.10.510.10:FF:000459">
    <property type="entry name" value="Casein kinase II subunit alpha"/>
    <property type="match status" value="1"/>
</dbReference>
<dbReference type="FunFam" id="3.30.200.20:FF:000088">
    <property type="entry name" value="Casein kinase II subunit alpha"/>
    <property type="match status" value="1"/>
</dbReference>
<dbReference type="Gene3D" id="3.30.200.20">
    <property type="entry name" value="Phosphorylase Kinase, domain 1"/>
    <property type="match status" value="1"/>
</dbReference>
<dbReference type="Gene3D" id="1.10.510.10">
    <property type="entry name" value="Transferase(Phosphotransferase) domain 1"/>
    <property type="match status" value="1"/>
</dbReference>
<dbReference type="InterPro" id="IPR045216">
    <property type="entry name" value="CK2_alpha"/>
</dbReference>
<dbReference type="InterPro" id="IPR011009">
    <property type="entry name" value="Kinase-like_dom_sf"/>
</dbReference>
<dbReference type="InterPro" id="IPR000719">
    <property type="entry name" value="Prot_kinase_dom"/>
</dbReference>
<dbReference type="InterPro" id="IPR017441">
    <property type="entry name" value="Protein_kinase_ATP_BS"/>
</dbReference>
<dbReference type="InterPro" id="IPR008271">
    <property type="entry name" value="Ser/Thr_kinase_AS"/>
</dbReference>
<dbReference type="PANTHER" id="PTHR24054">
    <property type="entry name" value="CASEIN KINASE II SUBUNIT ALPHA"/>
    <property type="match status" value="1"/>
</dbReference>
<dbReference type="PANTHER" id="PTHR24054:SF0">
    <property type="entry name" value="CASEIN KINASE II SUBUNIT ALPHA"/>
    <property type="match status" value="1"/>
</dbReference>
<dbReference type="Pfam" id="PF00069">
    <property type="entry name" value="Pkinase"/>
    <property type="match status" value="1"/>
</dbReference>
<dbReference type="SMART" id="SM00220">
    <property type="entry name" value="S_TKc"/>
    <property type="match status" value="1"/>
</dbReference>
<dbReference type="SUPFAM" id="SSF56112">
    <property type="entry name" value="Protein kinase-like (PK-like)"/>
    <property type="match status" value="1"/>
</dbReference>
<dbReference type="PROSITE" id="PS00107">
    <property type="entry name" value="PROTEIN_KINASE_ATP"/>
    <property type="match status" value="1"/>
</dbReference>
<dbReference type="PROSITE" id="PS50011">
    <property type="entry name" value="PROTEIN_KINASE_DOM"/>
    <property type="match status" value="1"/>
</dbReference>
<dbReference type="PROSITE" id="PS00108">
    <property type="entry name" value="PROTEIN_KINASE_ST"/>
    <property type="match status" value="1"/>
</dbReference>
<gene>
    <name evidence="6" type="primary">cka1</name>
    <name type="synonym">orb5</name>
    <name evidence="6" type="ORF">SPAC23C11.11</name>
</gene>
<feature type="chain" id="PRO_0000085903" description="Casein kinase II subunit alpha">
    <location>
        <begin position="1"/>
        <end position="332"/>
    </location>
</feature>
<feature type="domain" description="Protein kinase" evidence="3">
    <location>
        <begin position="43"/>
        <end position="327"/>
    </location>
</feature>
<feature type="active site" description="Proton acceptor" evidence="3 4">
    <location>
        <position position="160"/>
    </location>
</feature>
<feature type="binding site" evidence="3">
    <location>
        <begin position="49"/>
        <end position="57"/>
    </location>
    <ligand>
        <name>ATP</name>
        <dbReference type="ChEBI" id="CHEBI:30616"/>
    </ligand>
</feature>
<feature type="binding site" evidence="3">
    <location>
        <position position="72"/>
    </location>
    <ligand>
        <name>ATP</name>
        <dbReference type="ChEBI" id="CHEBI:30616"/>
    </ligand>
</feature>
<feature type="sequence conflict" description="In Ref. 1; CAA52331." evidence="5" ref="1">
    <original>S</original>
    <variation>R</variation>
    <location>
        <position position="67"/>
    </location>
</feature>
<feature type="sequence conflict" description="In Ref. 1; CAA52331." evidence="5" ref="1">
    <original>S</original>
    <variation>L</variation>
    <location>
        <position position="141"/>
    </location>
</feature>
<feature type="sequence conflict" description="In Ref. 1; CAA52331." evidence="5" ref="1">
    <original>MID</original>
    <variation>IIV</variation>
    <location>
        <begin position="167"/>
        <end position="169"/>
    </location>
</feature>
<feature type="sequence conflict" description="In Ref. 1; CAA52331." evidence="5" ref="1">
    <original>DT</original>
    <variation>EP</variation>
    <location>
        <begin position="234"/>
        <end position="235"/>
    </location>
</feature>
<feature type="sequence conflict" description="In Ref. 1; CAA52331." evidence="5" ref="1">
    <location>
        <position position="287"/>
    </location>
</feature>
<name>CSK2A_SCHPO</name>
<reference key="1">
    <citation type="journal article" date="1994" name="Mol. Cell. Biol.">
        <title>The Schizosaccharomyces pombe casein kinase II alpha and beta subunits: evolutionary conservation and positive role of the beta subunit.</title>
        <authorList>
            <person name="Roussou I."/>
            <person name="Draetta G."/>
        </authorList>
    </citation>
    <scope>NUCLEOTIDE SEQUENCE [MRNA]</scope>
</reference>
<reference key="2">
    <citation type="journal article" date="1994" name="EMBO J.">
        <title>Genetic analysis of cell morphogenesis in fission yeast -- a role for casein kinase II in the establishment of polarized growth.</title>
        <authorList>
            <person name="Snell V."/>
            <person name="Nurse P."/>
        </authorList>
    </citation>
    <scope>NUCLEOTIDE SEQUENCE [MRNA]</scope>
</reference>
<reference key="3">
    <citation type="journal article" date="2002" name="Nature">
        <title>The genome sequence of Schizosaccharomyces pombe.</title>
        <authorList>
            <person name="Wood V."/>
            <person name="Gwilliam R."/>
            <person name="Rajandream M.A."/>
            <person name="Lyne M.H."/>
            <person name="Lyne R."/>
            <person name="Stewart A."/>
            <person name="Sgouros J.G."/>
            <person name="Peat N."/>
            <person name="Hayles J."/>
            <person name="Baker S.G."/>
            <person name="Basham D."/>
            <person name="Bowman S."/>
            <person name="Brooks K."/>
            <person name="Brown D."/>
            <person name="Brown S."/>
            <person name="Chillingworth T."/>
            <person name="Churcher C.M."/>
            <person name="Collins M."/>
            <person name="Connor R."/>
            <person name="Cronin A."/>
            <person name="Davis P."/>
            <person name="Feltwell T."/>
            <person name="Fraser A."/>
            <person name="Gentles S."/>
            <person name="Goble A."/>
            <person name="Hamlin N."/>
            <person name="Harris D.E."/>
            <person name="Hidalgo J."/>
            <person name="Hodgson G."/>
            <person name="Holroyd S."/>
            <person name="Hornsby T."/>
            <person name="Howarth S."/>
            <person name="Huckle E.J."/>
            <person name="Hunt S."/>
            <person name="Jagels K."/>
            <person name="James K.D."/>
            <person name="Jones L."/>
            <person name="Jones M."/>
            <person name="Leather S."/>
            <person name="McDonald S."/>
            <person name="McLean J."/>
            <person name="Mooney P."/>
            <person name="Moule S."/>
            <person name="Mungall K.L."/>
            <person name="Murphy L.D."/>
            <person name="Niblett D."/>
            <person name="Odell C."/>
            <person name="Oliver K."/>
            <person name="O'Neil S."/>
            <person name="Pearson D."/>
            <person name="Quail M.A."/>
            <person name="Rabbinowitsch E."/>
            <person name="Rutherford K.M."/>
            <person name="Rutter S."/>
            <person name="Saunders D."/>
            <person name="Seeger K."/>
            <person name="Sharp S."/>
            <person name="Skelton J."/>
            <person name="Simmonds M.N."/>
            <person name="Squares R."/>
            <person name="Squares S."/>
            <person name="Stevens K."/>
            <person name="Taylor K."/>
            <person name="Taylor R.G."/>
            <person name="Tivey A."/>
            <person name="Walsh S.V."/>
            <person name="Warren T."/>
            <person name="Whitehead S."/>
            <person name="Woodward J.R."/>
            <person name="Volckaert G."/>
            <person name="Aert R."/>
            <person name="Robben J."/>
            <person name="Grymonprez B."/>
            <person name="Weltjens I."/>
            <person name="Vanstreels E."/>
            <person name="Rieger M."/>
            <person name="Schaefer M."/>
            <person name="Mueller-Auer S."/>
            <person name="Gabel C."/>
            <person name="Fuchs M."/>
            <person name="Duesterhoeft A."/>
            <person name="Fritzc C."/>
            <person name="Holzer E."/>
            <person name="Moestl D."/>
            <person name="Hilbert H."/>
            <person name="Borzym K."/>
            <person name="Langer I."/>
            <person name="Beck A."/>
            <person name="Lehrach H."/>
            <person name="Reinhardt R."/>
            <person name="Pohl T.M."/>
            <person name="Eger P."/>
            <person name="Zimmermann W."/>
            <person name="Wedler H."/>
            <person name="Wambutt R."/>
            <person name="Purnelle B."/>
            <person name="Goffeau A."/>
            <person name="Cadieu E."/>
            <person name="Dreano S."/>
            <person name="Gloux S."/>
            <person name="Lelaure V."/>
            <person name="Mottier S."/>
            <person name="Galibert F."/>
            <person name="Aves S.J."/>
            <person name="Xiang Z."/>
            <person name="Hunt C."/>
            <person name="Moore K."/>
            <person name="Hurst S.M."/>
            <person name="Lucas M."/>
            <person name="Rochet M."/>
            <person name="Gaillardin C."/>
            <person name="Tallada V.A."/>
            <person name="Garzon A."/>
            <person name="Thode G."/>
            <person name="Daga R.R."/>
            <person name="Cruzado L."/>
            <person name="Jimenez J."/>
            <person name="Sanchez M."/>
            <person name="del Rey F."/>
            <person name="Benito J."/>
            <person name="Dominguez A."/>
            <person name="Revuelta J.L."/>
            <person name="Moreno S."/>
            <person name="Armstrong J."/>
            <person name="Forsburg S.L."/>
            <person name="Cerutti L."/>
            <person name="Lowe T."/>
            <person name="McCombie W.R."/>
            <person name="Paulsen I."/>
            <person name="Potashkin J."/>
            <person name="Shpakovski G.V."/>
            <person name="Ussery D."/>
            <person name="Barrell B.G."/>
            <person name="Nurse P."/>
        </authorList>
    </citation>
    <scope>NUCLEOTIDE SEQUENCE [LARGE SCALE GENOMIC DNA]</scope>
    <source>
        <strain>972 / ATCC 24843</strain>
    </source>
</reference>